<keyword id="KW-0067">ATP-binding</keyword>
<keyword id="KW-0963">Cytoplasm</keyword>
<keyword id="KW-1015">Disulfide bond</keyword>
<keyword id="KW-0547">Nucleotide-binding</keyword>
<keyword id="KW-1185">Reference proteome</keyword>
<keyword id="KW-0694">RNA-binding</keyword>
<keyword id="KW-0808">Transferase</keyword>
<keyword id="KW-0819">tRNA processing</keyword>
<keyword id="KW-0820">tRNA-binding</keyword>
<dbReference type="EC" id="2.8.1.13" evidence="1"/>
<dbReference type="EMBL" id="CP000387">
    <property type="protein sequence ID" value="ABN45717.1"/>
    <property type="molecule type" value="Genomic_DNA"/>
</dbReference>
<dbReference type="RefSeq" id="WP_011837714.1">
    <property type="nucleotide sequence ID" value="NC_009009.1"/>
</dbReference>
<dbReference type="RefSeq" id="YP_001036267.1">
    <property type="nucleotide sequence ID" value="NC_009009.1"/>
</dbReference>
<dbReference type="SMR" id="A3CRB2"/>
<dbReference type="STRING" id="388919.SSA_2360"/>
<dbReference type="KEGG" id="ssa:SSA_2360"/>
<dbReference type="PATRIC" id="fig|388919.9.peg.2241"/>
<dbReference type="eggNOG" id="COG0482">
    <property type="taxonomic scope" value="Bacteria"/>
</dbReference>
<dbReference type="HOGENOM" id="CLU_035188_1_0_9"/>
<dbReference type="OrthoDB" id="9800696at2"/>
<dbReference type="Proteomes" id="UP000002148">
    <property type="component" value="Chromosome"/>
</dbReference>
<dbReference type="GO" id="GO:0005737">
    <property type="term" value="C:cytoplasm"/>
    <property type="evidence" value="ECO:0007669"/>
    <property type="project" value="UniProtKB-SubCell"/>
</dbReference>
<dbReference type="GO" id="GO:0005524">
    <property type="term" value="F:ATP binding"/>
    <property type="evidence" value="ECO:0007669"/>
    <property type="project" value="UniProtKB-KW"/>
</dbReference>
<dbReference type="GO" id="GO:0000049">
    <property type="term" value="F:tRNA binding"/>
    <property type="evidence" value="ECO:0007669"/>
    <property type="project" value="UniProtKB-KW"/>
</dbReference>
<dbReference type="GO" id="GO:0103016">
    <property type="term" value="F:tRNA-uridine 2-sulfurtransferase activity"/>
    <property type="evidence" value="ECO:0007669"/>
    <property type="project" value="UniProtKB-EC"/>
</dbReference>
<dbReference type="GO" id="GO:0002143">
    <property type="term" value="P:tRNA wobble position uridine thiolation"/>
    <property type="evidence" value="ECO:0007669"/>
    <property type="project" value="TreeGrafter"/>
</dbReference>
<dbReference type="CDD" id="cd01998">
    <property type="entry name" value="MnmA_TRMU-like"/>
    <property type="match status" value="1"/>
</dbReference>
<dbReference type="FunFam" id="2.30.30.280:FF:000001">
    <property type="entry name" value="tRNA-specific 2-thiouridylase MnmA"/>
    <property type="match status" value="1"/>
</dbReference>
<dbReference type="FunFam" id="2.40.30.10:FF:000023">
    <property type="entry name" value="tRNA-specific 2-thiouridylase MnmA"/>
    <property type="match status" value="1"/>
</dbReference>
<dbReference type="FunFam" id="3.40.50.620:FF:000004">
    <property type="entry name" value="tRNA-specific 2-thiouridylase MnmA"/>
    <property type="match status" value="1"/>
</dbReference>
<dbReference type="Gene3D" id="2.30.30.280">
    <property type="entry name" value="Adenine nucleotide alpha hydrolases-like domains"/>
    <property type="match status" value="1"/>
</dbReference>
<dbReference type="Gene3D" id="3.40.50.620">
    <property type="entry name" value="HUPs"/>
    <property type="match status" value="1"/>
</dbReference>
<dbReference type="Gene3D" id="2.40.30.10">
    <property type="entry name" value="Translation factors"/>
    <property type="match status" value="1"/>
</dbReference>
<dbReference type="HAMAP" id="MF_00144">
    <property type="entry name" value="tRNA_thiouridyl_MnmA"/>
    <property type="match status" value="1"/>
</dbReference>
<dbReference type="InterPro" id="IPR004506">
    <property type="entry name" value="MnmA-like"/>
</dbReference>
<dbReference type="InterPro" id="IPR046885">
    <property type="entry name" value="MnmA-like_C"/>
</dbReference>
<dbReference type="InterPro" id="IPR046884">
    <property type="entry name" value="MnmA-like_central"/>
</dbReference>
<dbReference type="InterPro" id="IPR023382">
    <property type="entry name" value="MnmA-like_central_sf"/>
</dbReference>
<dbReference type="InterPro" id="IPR014729">
    <property type="entry name" value="Rossmann-like_a/b/a_fold"/>
</dbReference>
<dbReference type="NCBIfam" id="NF001138">
    <property type="entry name" value="PRK00143.1"/>
    <property type="match status" value="1"/>
</dbReference>
<dbReference type="NCBIfam" id="TIGR00420">
    <property type="entry name" value="trmU"/>
    <property type="match status" value="1"/>
</dbReference>
<dbReference type="PANTHER" id="PTHR11933:SF5">
    <property type="entry name" value="MITOCHONDRIAL TRNA-SPECIFIC 2-THIOURIDYLASE 1"/>
    <property type="match status" value="1"/>
</dbReference>
<dbReference type="PANTHER" id="PTHR11933">
    <property type="entry name" value="TRNA 5-METHYLAMINOMETHYL-2-THIOURIDYLATE -METHYLTRANSFERASE"/>
    <property type="match status" value="1"/>
</dbReference>
<dbReference type="Pfam" id="PF03054">
    <property type="entry name" value="tRNA_Me_trans"/>
    <property type="match status" value="1"/>
</dbReference>
<dbReference type="Pfam" id="PF20258">
    <property type="entry name" value="tRNA_Me_trans_C"/>
    <property type="match status" value="1"/>
</dbReference>
<dbReference type="Pfam" id="PF20259">
    <property type="entry name" value="tRNA_Me_trans_M"/>
    <property type="match status" value="1"/>
</dbReference>
<dbReference type="SUPFAM" id="SSF52402">
    <property type="entry name" value="Adenine nucleotide alpha hydrolases-like"/>
    <property type="match status" value="1"/>
</dbReference>
<gene>
    <name evidence="1" type="primary">mnmA</name>
    <name type="synonym">trmU</name>
    <name type="ordered locus">SSA_2360</name>
</gene>
<protein>
    <recommendedName>
        <fullName evidence="1">tRNA-specific 2-thiouridylase MnmA</fullName>
        <ecNumber evidence="1">2.8.1.13</ecNumber>
    </recommendedName>
</protein>
<organism>
    <name type="scientific">Streptococcus sanguinis (strain SK36)</name>
    <dbReference type="NCBI Taxonomy" id="388919"/>
    <lineage>
        <taxon>Bacteria</taxon>
        <taxon>Bacillati</taxon>
        <taxon>Bacillota</taxon>
        <taxon>Bacilli</taxon>
        <taxon>Lactobacillales</taxon>
        <taxon>Streptococcaceae</taxon>
        <taxon>Streptococcus</taxon>
    </lineage>
</organism>
<name>MNMA_STRSV</name>
<feature type="chain" id="PRO_1000009588" description="tRNA-specific 2-thiouridylase MnmA">
    <location>
        <begin position="1"/>
        <end position="373"/>
    </location>
</feature>
<feature type="region of interest" description="Interaction with target base in tRNA" evidence="1">
    <location>
        <begin position="98"/>
        <end position="100"/>
    </location>
</feature>
<feature type="region of interest" description="Interaction with tRNA" evidence="1">
    <location>
        <begin position="150"/>
        <end position="152"/>
    </location>
</feature>
<feature type="region of interest" description="Interaction with tRNA" evidence="1">
    <location>
        <begin position="312"/>
        <end position="313"/>
    </location>
</feature>
<feature type="active site" description="Nucleophile" evidence="1">
    <location>
        <position position="103"/>
    </location>
</feature>
<feature type="active site" description="Cysteine persulfide intermediate" evidence="1">
    <location>
        <position position="200"/>
    </location>
</feature>
<feature type="binding site" evidence="1">
    <location>
        <begin position="12"/>
        <end position="19"/>
    </location>
    <ligand>
        <name>ATP</name>
        <dbReference type="ChEBI" id="CHEBI:30616"/>
    </ligand>
</feature>
<feature type="binding site" evidence="1">
    <location>
        <position position="38"/>
    </location>
    <ligand>
        <name>ATP</name>
        <dbReference type="ChEBI" id="CHEBI:30616"/>
    </ligand>
</feature>
<feature type="binding site" evidence="1">
    <location>
        <position position="127"/>
    </location>
    <ligand>
        <name>ATP</name>
        <dbReference type="ChEBI" id="CHEBI:30616"/>
    </ligand>
</feature>
<feature type="site" description="Interaction with tRNA" evidence="1">
    <location>
        <position position="128"/>
    </location>
</feature>
<feature type="site" description="Interaction with tRNA" evidence="1">
    <location>
        <position position="344"/>
    </location>
</feature>
<feature type="disulfide bond" description="Alternate" evidence="1">
    <location>
        <begin position="103"/>
        <end position="200"/>
    </location>
</feature>
<reference key="1">
    <citation type="journal article" date="2007" name="J. Bacteriol.">
        <title>Genome of the opportunistic pathogen Streptococcus sanguinis.</title>
        <authorList>
            <person name="Xu P."/>
            <person name="Alves J.M."/>
            <person name="Kitten T."/>
            <person name="Brown A."/>
            <person name="Chen Z."/>
            <person name="Ozaki L.S."/>
            <person name="Manque P."/>
            <person name="Ge X."/>
            <person name="Serrano M.G."/>
            <person name="Puiu D."/>
            <person name="Hendricks S."/>
            <person name="Wang Y."/>
            <person name="Chaplin M.D."/>
            <person name="Akan D."/>
            <person name="Paik S."/>
            <person name="Peterson D.L."/>
            <person name="Macrina F.L."/>
            <person name="Buck G.A."/>
        </authorList>
    </citation>
    <scope>NUCLEOTIDE SEQUENCE [LARGE SCALE GENOMIC DNA]</scope>
    <source>
        <strain>SK36</strain>
    </source>
</reference>
<accession>A3CRB2</accession>
<proteinExistence type="inferred from homology"/>
<sequence length="373" mass="41797">MSDNSKIRVVVGMSGGVDSSVTALLLKEQGYDVIGIFMKNWDDTDEFGVCTATEDYKDVAAVADQIGIPYYSVNFEKEYWDRVFEYFLAEYRAGRTPNPDVMCNKEIKFKAFLDYALTLGADYVATGHYAQVKRDQDGLVHMLRGKDNNKDQTYFLSQLSQEQLQKTMFPLGHLEKPEVRAIAERAGLATAKKKDSTGICFIGEKNFKEFLSQYLPAQPGRMMTLEGRDMGQHAGLMYYTIGQRGGLGIGGQHGGDNEPWFVVGKDLSQNILYVGQGFYHDNLMSTSLDASQVHFTKEMPEEFTMECTAKFRYRQPDSKVTVTVKGDKAVVNFDKPQRAITPGQGVVFYDGDECLGGGLIDRAYKNGQVLQYI</sequence>
<evidence type="ECO:0000255" key="1">
    <source>
        <dbReference type="HAMAP-Rule" id="MF_00144"/>
    </source>
</evidence>
<comment type="function">
    <text evidence="1">Catalyzes the 2-thiolation of uridine at the wobble position (U34) of tRNA, leading to the formation of s(2)U34.</text>
</comment>
<comment type="catalytic activity">
    <reaction evidence="1">
        <text>S-sulfanyl-L-cysteinyl-[protein] + uridine(34) in tRNA + AH2 + ATP = 2-thiouridine(34) in tRNA + L-cysteinyl-[protein] + A + AMP + diphosphate + H(+)</text>
        <dbReference type="Rhea" id="RHEA:47032"/>
        <dbReference type="Rhea" id="RHEA-COMP:10131"/>
        <dbReference type="Rhea" id="RHEA-COMP:11726"/>
        <dbReference type="Rhea" id="RHEA-COMP:11727"/>
        <dbReference type="Rhea" id="RHEA-COMP:11728"/>
        <dbReference type="ChEBI" id="CHEBI:13193"/>
        <dbReference type="ChEBI" id="CHEBI:15378"/>
        <dbReference type="ChEBI" id="CHEBI:17499"/>
        <dbReference type="ChEBI" id="CHEBI:29950"/>
        <dbReference type="ChEBI" id="CHEBI:30616"/>
        <dbReference type="ChEBI" id="CHEBI:33019"/>
        <dbReference type="ChEBI" id="CHEBI:61963"/>
        <dbReference type="ChEBI" id="CHEBI:65315"/>
        <dbReference type="ChEBI" id="CHEBI:87170"/>
        <dbReference type="ChEBI" id="CHEBI:456215"/>
        <dbReference type="EC" id="2.8.1.13"/>
    </reaction>
</comment>
<comment type="subcellular location">
    <subcellularLocation>
        <location evidence="1">Cytoplasm</location>
    </subcellularLocation>
</comment>
<comment type="similarity">
    <text evidence="1">Belongs to the MnmA/TRMU family.</text>
</comment>